<protein>
    <recommendedName>
        <fullName evidence="1">Small ribosomal subunit protein uS15</fullName>
    </recommendedName>
    <alternativeName>
        <fullName evidence="2">30S ribosomal protein S15</fullName>
    </alternativeName>
</protein>
<accession>Q24UJ1</accession>
<keyword id="KW-1185">Reference proteome</keyword>
<keyword id="KW-0687">Ribonucleoprotein</keyword>
<keyword id="KW-0689">Ribosomal protein</keyword>
<keyword id="KW-0694">RNA-binding</keyword>
<keyword id="KW-0699">rRNA-binding</keyword>
<comment type="function">
    <text evidence="1">One of the primary rRNA binding proteins, it binds directly to 16S rRNA where it helps nucleate assembly of the platform of the 30S subunit by binding and bridging several RNA helices of the 16S rRNA.</text>
</comment>
<comment type="function">
    <text evidence="1">Forms an intersubunit bridge (bridge B4) with the 23S rRNA of the 50S subunit in the ribosome.</text>
</comment>
<comment type="subunit">
    <text evidence="1">Part of the 30S ribosomal subunit. Forms a bridge to the 50S subunit in the 70S ribosome, contacting the 23S rRNA.</text>
</comment>
<comment type="similarity">
    <text evidence="1">Belongs to the universal ribosomal protein uS15 family.</text>
</comment>
<dbReference type="EMBL" id="AP008230">
    <property type="protein sequence ID" value="BAE84301.1"/>
    <property type="molecule type" value="Genomic_DNA"/>
</dbReference>
<dbReference type="RefSeq" id="WP_005808855.1">
    <property type="nucleotide sequence ID" value="NC_007907.1"/>
</dbReference>
<dbReference type="SMR" id="Q24UJ1"/>
<dbReference type="STRING" id="138119.DSY2512"/>
<dbReference type="KEGG" id="dsy:DSY2512"/>
<dbReference type="eggNOG" id="COG0184">
    <property type="taxonomic scope" value="Bacteria"/>
</dbReference>
<dbReference type="HOGENOM" id="CLU_148518_0_0_9"/>
<dbReference type="Proteomes" id="UP000001946">
    <property type="component" value="Chromosome"/>
</dbReference>
<dbReference type="GO" id="GO:0022627">
    <property type="term" value="C:cytosolic small ribosomal subunit"/>
    <property type="evidence" value="ECO:0007669"/>
    <property type="project" value="TreeGrafter"/>
</dbReference>
<dbReference type="GO" id="GO:0019843">
    <property type="term" value="F:rRNA binding"/>
    <property type="evidence" value="ECO:0007669"/>
    <property type="project" value="UniProtKB-UniRule"/>
</dbReference>
<dbReference type="GO" id="GO:0003735">
    <property type="term" value="F:structural constituent of ribosome"/>
    <property type="evidence" value="ECO:0007669"/>
    <property type="project" value="InterPro"/>
</dbReference>
<dbReference type="GO" id="GO:0006412">
    <property type="term" value="P:translation"/>
    <property type="evidence" value="ECO:0007669"/>
    <property type="project" value="UniProtKB-UniRule"/>
</dbReference>
<dbReference type="CDD" id="cd00353">
    <property type="entry name" value="Ribosomal_S15p_S13e"/>
    <property type="match status" value="1"/>
</dbReference>
<dbReference type="FunFam" id="1.10.287.10:FF:000002">
    <property type="entry name" value="30S ribosomal protein S15"/>
    <property type="match status" value="1"/>
</dbReference>
<dbReference type="Gene3D" id="6.10.250.3130">
    <property type="match status" value="1"/>
</dbReference>
<dbReference type="Gene3D" id="1.10.287.10">
    <property type="entry name" value="S15/NS1, RNA-binding"/>
    <property type="match status" value="1"/>
</dbReference>
<dbReference type="HAMAP" id="MF_01343_B">
    <property type="entry name" value="Ribosomal_uS15_B"/>
    <property type="match status" value="1"/>
</dbReference>
<dbReference type="InterPro" id="IPR000589">
    <property type="entry name" value="Ribosomal_uS15"/>
</dbReference>
<dbReference type="InterPro" id="IPR005290">
    <property type="entry name" value="Ribosomal_uS15_bac-type"/>
</dbReference>
<dbReference type="InterPro" id="IPR009068">
    <property type="entry name" value="uS15_NS1_RNA-bd_sf"/>
</dbReference>
<dbReference type="NCBIfam" id="TIGR00952">
    <property type="entry name" value="S15_bact"/>
    <property type="match status" value="1"/>
</dbReference>
<dbReference type="PANTHER" id="PTHR23321">
    <property type="entry name" value="RIBOSOMAL PROTEIN S15, BACTERIAL AND ORGANELLAR"/>
    <property type="match status" value="1"/>
</dbReference>
<dbReference type="PANTHER" id="PTHR23321:SF26">
    <property type="entry name" value="SMALL RIBOSOMAL SUBUNIT PROTEIN US15M"/>
    <property type="match status" value="1"/>
</dbReference>
<dbReference type="Pfam" id="PF00312">
    <property type="entry name" value="Ribosomal_S15"/>
    <property type="match status" value="1"/>
</dbReference>
<dbReference type="SMART" id="SM01387">
    <property type="entry name" value="Ribosomal_S15"/>
    <property type="match status" value="1"/>
</dbReference>
<dbReference type="SUPFAM" id="SSF47060">
    <property type="entry name" value="S15/NS1 RNA-binding domain"/>
    <property type="match status" value="1"/>
</dbReference>
<dbReference type="PROSITE" id="PS00362">
    <property type="entry name" value="RIBOSOMAL_S15"/>
    <property type="match status" value="1"/>
</dbReference>
<evidence type="ECO:0000255" key="1">
    <source>
        <dbReference type="HAMAP-Rule" id="MF_01343"/>
    </source>
</evidence>
<evidence type="ECO:0000305" key="2"/>
<reference key="1">
    <citation type="journal article" date="2006" name="J. Bacteriol.">
        <title>Complete genome sequence of the dehalorespiring bacterium Desulfitobacterium hafniense Y51 and comparison with Dehalococcoides ethenogenes 195.</title>
        <authorList>
            <person name="Nonaka H."/>
            <person name="Keresztes G."/>
            <person name="Shinoda Y."/>
            <person name="Ikenaga Y."/>
            <person name="Abe M."/>
            <person name="Naito K."/>
            <person name="Inatomi K."/>
            <person name="Furukawa K."/>
            <person name="Inui M."/>
            <person name="Yukawa H."/>
        </authorList>
    </citation>
    <scope>NUCLEOTIDE SEQUENCE [LARGE SCALE GENOMIC DNA]</scope>
    <source>
        <strain>Y51</strain>
    </source>
</reference>
<feature type="chain" id="PRO_0000255490" description="Small ribosomal subunit protein uS15">
    <location>
        <begin position="1"/>
        <end position="88"/>
    </location>
</feature>
<proteinExistence type="inferred from homology"/>
<name>RS15_DESHY</name>
<sequence length="88" mass="10481">MMTAEKKKEIIAKFQQHEGDTGSPEVQIALLTERITYLTEHFKTHKKDHHSRRGLLKMVGQRRALLNYLKDMDFNRYRKIISDLGLRR</sequence>
<gene>
    <name evidence="1" type="primary">rpsO</name>
    <name type="ordered locus">DSY2512</name>
</gene>
<organism>
    <name type="scientific">Desulfitobacterium hafniense (strain Y51)</name>
    <dbReference type="NCBI Taxonomy" id="138119"/>
    <lineage>
        <taxon>Bacteria</taxon>
        <taxon>Bacillati</taxon>
        <taxon>Bacillota</taxon>
        <taxon>Clostridia</taxon>
        <taxon>Eubacteriales</taxon>
        <taxon>Desulfitobacteriaceae</taxon>
        <taxon>Desulfitobacterium</taxon>
    </lineage>
</organism>